<reference key="1">
    <citation type="journal article" date="2009" name="Mol. Biol. Evol.">
        <title>Molecular evolution, functional variation, and proposed nomenclature of the gene family that includes sphingomyelinase D in sicariid spider venoms.</title>
        <authorList>
            <person name="Binford G.J."/>
            <person name="Bodner M.R."/>
            <person name="Cordes M.H."/>
            <person name="Baldwin K.L."/>
            <person name="Rynerson M.R."/>
            <person name="Burns S.N."/>
            <person name="Zobel-Thropp P.A."/>
        </authorList>
    </citation>
    <scope>NUCLEOTIDE SEQUENCE [MRNA]</scope>
    <scope>NOMENCLATURE</scope>
    <source>
        <tissue>Venom gland</tissue>
    </source>
</reference>
<comment type="function">
    <text evidence="1 3">Dermonecrotic toxins cleave the phosphodiester linkage between the phosphate and headgroup of certain phospholipids (sphingolipid and lysolipid substrates), forming an alcohol (often choline) and a cyclic phosphate (By similarity). This toxin acts on sphingomyelin (SM) (By similarity). It may also act on ceramide phosphoethanolamine (CPE), lysophosphatidylcholine (LPC) and lysophosphatidylethanolamine (LPE), but not on lysophosphatidylserine (LPS), and lysophosphatidylglycerol (LPG) (By similarity). It acts by transphosphatidylation, releasing exclusively cyclic phosphate products as second products (By similarity). Induces dermonecrosis, hemolysis, increased vascular permeability, edema, inflammatory response, and platelet aggregation (By similarity).</text>
</comment>
<comment type="catalytic activity">
    <reaction evidence="1">
        <text>an N-(acyl)-sphingosylphosphocholine = an N-(acyl)-sphingosyl-1,3-cyclic phosphate + choline</text>
        <dbReference type="Rhea" id="RHEA:60652"/>
        <dbReference type="ChEBI" id="CHEBI:15354"/>
        <dbReference type="ChEBI" id="CHEBI:64583"/>
        <dbReference type="ChEBI" id="CHEBI:143892"/>
    </reaction>
</comment>
<comment type="catalytic activity">
    <reaction evidence="1">
        <text>an N-(acyl)-sphingosylphosphoethanolamine = an N-(acyl)-sphingosyl-1,3-cyclic phosphate + ethanolamine</text>
        <dbReference type="Rhea" id="RHEA:60648"/>
        <dbReference type="ChEBI" id="CHEBI:57603"/>
        <dbReference type="ChEBI" id="CHEBI:143891"/>
        <dbReference type="ChEBI" id="CHEBI:143892"/>
    </reaction>
</comment>
<comment type="catalytic activity">
    <reaction evidence="1">
        <text>a 1-acyl-sn-glycero-3-phosphocholine = a 1-acyl-sn-glycero-2,3-cyclic phosphate + choline</text>
        <dbReference type="Rhea" id="RHEA:60700"/>
        <dbReference type="ChEBI" id="CHEBI:15354"/>
        <dbReference type="ChEBI" id="CHEBI:58168"/>
        <dbReference type="ChEBI" id="CHEBI:143947"/>
    </reaction>
</comment>
<comment type="catalytic activity">
    <reaction evidence="1">
        <text>a 1-acyl-sn-glycero-3-phosphoethanolamine = a 1-acyl-sn-glycero-2,3-cyclic phosphate + ethanolamine</text>
        <dbReference type="Rhea" id="RHEA:60704"/>
        <dbReference type="ChEBI" id="CHEBI:57603"/>
        <dbReference type="ChEBI" id="CHEBI:64381"/>
        <dbReference type="ChEBI" id="CHEBI:143947"/>
    </reaction>
</comment>
<comment type="cofactor">
    <cofactor evidence="5">
        <name>Mg(2+)</name>
        <dbReference type="ChEBI" id="CHEBI:18420"/>
    </cofactor>
    <text evidence="5">Binds 1 Mg(2+) ion per subunit.</text>
</comment>
<comment type="subcellular location">
    <subcellularLocation>
        <location evidence="8">Secreted</location>
    </subcellularLocation>
</comment>
<comment type="tissue specificity">
    <text evidence="8">Expressed by the venom gland.</text>
</comment>
<comment type="similarity">
    <text evidence="7">Belongs to the arthropod phospholipase D family. Class II subfamily.</text>
</comment>
<comment type="caution">
    <text evidence="1 2 4">The most common activity assay for dermonecrotic toxins detects enzymatic activity by monitoring choline release from substrate. Liberation of choline from sphingomyelin (SM) or lysophosphatidylcholine (LPC) is commonly assumed to result from substrate hydrolysis, giving either ceramide-1-phosphate (C1P) or lysophosphatidic acid (LPA), respectively, as a second product. However, two studies from Lajoie and colleagues (2013 and 2015) report the observation of exclusive formation of cyclic phosphate products as second products, resulting from intramolecular transphosphatidylation. Cyclic phosphates have vastly different biological properties from their monoester counterparts, and they may be relevant to the pathology of brown spider envenomation.</text>
</comment>
<keyword id="KW-0204">Cytolysis</keyword>
<keyword id="KW-1061">Dermonecrotic toxin</keyword>
<keyword id="KW-1015">Disulfide bond</keyword>
<keyword id="KW-0354">Hemolysis</keyword>
<keyword id="KW-0442">Lipid degradation</keyword>
<keyword id="KW-0443">Lipid metabolism</keyword>
<keyword id="KW-0456">Lyase</keyword>
<keyword id="KW-0460">Magnesium</keyword>
<keyword id="KW-0479">Metal-binding</keyword>
<keyword id="KW-0964">Secreted</keyword>
<keyword id="KW-0800">Toxin</keyword>
<sequence length="275" mass="31711">WIMGHMVNAIEQVDEFLDLGANAIEFDVDFDDDGVAKYTHHGIPCDCGRLCTKYAVFTEYLDYVRQVTTPGDPKFRKELVLLALDLKLQRISSEKAYAAGVDVATKLLDHYWMRGWNGGRAYILLNIPLVEDYEFIRAFKDTLRKEGHEQYNAKVGINFTGNEDLDEIREVLEKLGEDEHIWQADGITSCFPRGTERLKKALEKRDTPGYKYISKVYAWTLVRSSIMRRSLRLGVDGVMSNYPDSVVKVLKEKEFSDKFRLATYADNPWEKFTPI</sequence>
<organism>
    <name type="scientific">Sicarius peruensis</name>
    <name type="common">Six-eyed sand spider</name>
    <dbReference type="NCBI Taxonomy" id="571541"/>
    <lineage>
        <taxon>Eukaryota</taxon>
        <taxon>Metazoa</taxon>
        <taxon>Ecdysozoa</taxon>
        <taxon>Arthropoda</taxon>
        <taxon>Chelicerata</taxon>
        <taxon>Arachnida</taxon>
        <taxon>Araneae</taxon>
        <taxon>Araneomorphae</taxon>
        <taxon>Haplogynae</taxon>
        <taxon>Scytodoidea</taxon>
        <taxon>Sicariidae</taxon>
        <taxon>Sicarius</taxon>
    </lineage>
</organism>
<proteinExistence type="evidence at transcript level"/>
<accession>C0JB60</accession>
<evidence type="ECO:0000250" key="1">
    <source>
        <dbReference type="UniProtKB" id="A0A0D4WTV1"/>
    </source>
</evidence>
<evidence type="ECO:0000250" key="2">
    <source>
        <dbReference type="UniProtKB" id="A0A0D4WV12"/>
    </source>
</evidence>
<evidence type="ECO:0000250" key="3">
    <source>
        <dbReference type="UniProtKB" id="P0CE80"/>
    </source>
</evidence>
<evidence type="ECO:0000250" key="4">
    <source>
        <dbReference type="UniProtKB" id="Q4ZFU2"/>
    </source>
</evidence>
<evidence type="ECO:0000250" key="5">
    <source>
        <dbReference type="UniProtKB" id="Q8I914"/>
    </source>
</evidence>
<evidence type="ECO:0000303" key="6">
    <source>
    </source>
</evidence>
<evidence type="ECO:0000305" key="7"/>
<evidence type="ECO:0000305" key="8">
    <source>
    </source>
</evidence>
<dbReference type="EC" id="4.6.1.-" evidence="4"/>
<dbReference type="EMBL" id="FJ171495">
    <property type="protein sequence ID" value="ACN48991.1"/>
    <property type="molecule type" value="mRNA"/>
</dbReference>
<dbReference type="EMBL" id="FJ171498">
    <property type="protein sequence ID" value="ACN48994.1"/>
    <property type="molecule type" value="mRNA"/>
</dbReference>
<dbReference type="SMR" id="C0JB60"/>
<dbReference type="GO" id="GO:0005576">
    <property type="term" value="C:extracellular region"/>
    <property type="evidence" value="ECO:0007669"/>
    <property type="project" value="UniProtKB-SubCell"/>
</dbReference>
<dbReference type="GO" id="GO:0016829">
    <property type="term" value="F:lyase activity"/>
    <property type="evidence" value="ECO:0007669"/>
    <property type="project" value="UniProtKB-KW"/>
</dbReference>
<dbReference type="GO" id="GO:0046872">
    <property type="term" value="F:metal ion binding"/>
    <property type="evidence" value="ECO:0007669"/>
    <property type="project" value="UniProtKB-KW"/>
</dbReference>
<dbReference type="GO" id="GO:0008081">
    <property type="term" value="F:phosphoric diester hydrolase activity"/>
    <property type="evidence" value="ECO:0007669"/>
    <property type="project" value="InterPro"/>
</dbReference>
<dbReference type="GO" id="GO:0090729">
    <property type="term" value="F:toxin activity"/>
    <property type="evidence" value="ECO:0007669"/>
    <property type="project" value="UniProtKB-KW"/>
</dbReference>
<dbReference type="GO" id="GO:0031640">
    <property type="term" value="P:killing of cells of another organism"/>
    <property type="evidence" value="ECO:0007669"/>
    <property type="project" value="UniProtKB-KW"/>
</dbReference>
<dbReference type="GO" id="GO:0016042">
    <property type="term" value="P:lipid catabolic process"/>
    <property type="evidence" value="ECO:0007669"/>
    <property type="project" value="UniProtKB-KW"/>
</dbReference>
<dbReference type="CDD" id="cd08576">
    <property type="entry name" value="GDPD_like_SMaseD_PLD"/>
    <property type="match status" value="1"/>
</dbReference>
<dbReference type="Gene3D" id="3.20.20.190">
    <property type="entry name" value="Phosphatidylinositol (PI) phosphodiesterase"/>
    <property type="match status" value="1"/>
</dbReference>
<dbReference type="InterPro" id="IPR017946">
    <property type="entry name" value="PLC-like_Pdiesterase_TIM-brl"/>
</dbReference>
<dbReference type="SUPFAM" id="SSF51695">
    <property type="entry name" value="PLC-like phosphodiesterases"/>
    <property type="match status" value="1"/>
</dbReference>
<name>B2I1_SICPE</name>
<feature type="chain" id="PRO_0000392873" description="Dermonecrotic toxin SpeSicTox-betaIIA2i">
    <location>
        <begin position="1" status="less than"/>
        <end position="275"/>
    </location>
</feature>
<feature type="active site" evidence="5">
    <location>
        <position position="5"/>
    </location>
</feature>
<feature type="active site" description="Nucleophile" evidence="5">
    <location>
        <position position="41"/>
    </location>
</feature>
<feature type="binding site" evidence="5">
    <location>
        <position position="25"/>
    </location>
    <ligand>
        <name>Mg(2+)</name>
        <dbReference type="ChEBI" id="CHEBI:18420"/>
    </ligand>
</feature>
<feature type="binding site" evidence="5">
    <location>
        <position position="27"/>
    </location>
    <ligand>
        <name>Mg(2+)</name>
        <dbReference type="ChEBI" id="CHEBI:18420"/>
    </ligand>
</feature>
<feature type="binding site" evidence="5">
    <location>
        <position position="85"/>
    </location>
    <ligand>
        <name>Mg(2+)</name>
        <dbReference type="ChEBI" id="CHEBI:18420"/>
    </ligand>
</feature>
<feature type="disulfide bond" evidence="3">
    <location>
        <begin position="45"/>
        <end position="51"/>
    </location>
</feature>
<feature type="disulfide bond" evidence="3">
    <location>
        <begin position="47"/>
        <end position="190"/>
    </location>
</feature>
<feature type="non-terminal residue">
    <location>
        <position position="1"/>
    </location>
</feature>
<protein>
    <recommendedName>
        <fullName evidence="6">Dermonecrotic toxin SpeSicTox-betaIIA2i</fullName>
        <ecNumber evidence="4">4.6.1.-</ecNumber>
    </recommendedName>
    <alternativeName>
        <fullName>Phospholipase D</fullName>
        <shortName>PLD</shortName>
    </alternativeName>
    <alternativeName>
        <fullName>Sphingomyelin phosphodiesterase D</fullName>
        <shortName>SMD</shortName>
        <shortName>SMase D</shortName>
        <shortName>Sphingomyelinase D</shortName>
    </alternativeName>
</protein>